<sequence length="133" mass="14428">MSGKGKVHGGKGKSSDSAKASTSHSARAGLQFPVGRIKRYLKRSAQNKVRVGSKSAIYLTAVLEYLTAEVLELAGNAAKDLKVKRITPRHLQLAIRGDEELDNLIKATIAYGGVLPHINKALLLKVEKKKQQK</sequence>
<name>H2AZ_PICGU</name>
<reference key="1">
    <citation type="journal article" date="2009" name="Nature">
        <title>Evolution of pathogenicity and sexual reproduction in eight Candida genomes.</title>
        <authorList>
            <person name="Butler G."/>
            <person name="Rasmussen M.D."/>
            <person name="Lin M.F."/>
            <person name="Santos M.A.S."/>
            <person name="Sakthikumar S."/>
            <person name="Munro C.A."/>
            <person name="Rheinbay E."/>
            <person name="Grabherr M."/>
            <person name="Forche A."/>
            <person name="Reedy J.L."/>
            <person name="Agrafioti I."/>
            <person name="Arnaud M.B."/>
            <person name="Bates S."/>
            <person name="Brown A.J.P."/>
            <person name="Brunke S."/>
            <person name="Costanzo M.C."/>
            <person name="Fitzpatrick D.A."/>
            <person name="de Groot P.W.J."/>
            <person name="Harris D."/>
            <person name="Hoyer L.L."/>
            <person name="Hube B."/>
            <person name="Klis F.M."/>
            <person name="Kodira C."/>
            <person name="Lennard N."/>
            <person name="Logue M.E."/>
            <person name="Martin R."/>
            <person name="Neiman A.M."/>
            <person name="Nikolaou E."/>
            <person name="Quail M.A."/>
            <person name="Quinn J."/>
            <person name="Santos M.C."/>
            <person name="Schmitzberger F.F."/>
            <person name="Sherlock G."/>
            <person name="Shah P."/>
            <person name="Silverstein K.A.T."/>
            <person name="Skrzypek M.S."/>
            <person name="Soll D."/>
            <person name="Staggs R."/>
            <person name="Stansfield I."/>
            <person name="Stumpf M.P.H."/>
            <person name="Sudbery P.E."/>
            <person name="Srikantha T."/>
            <person name="Zeng Q."/>
            <person name="Berman J."/>
            <person name="Berriman M."/>
            <person name="Heitman J."/>
            <person name="Gow N.A.R."/>
            <person name="Lorenz M.C."/>
            <person name="Birren B.W."/>
            <person name="Kellis M."/>
            <person name="Cuomo C.A."/>
        </authorList>
    </citation>
    <scope>NUCLEOTIDE SEQUENCE [LARGE SCALE GENOMIC DNA]</scope>
    <source>
        <strain>ATCC 6260 / CBS 566 / DSM 6381 / JCM 1539 / NBRC 10279 / NRRL Y-324</strain>
    </source>
</reference>
<keyword id="KW-0007">Acetylation</keyword>
<keyword id="KW-0158">Chromosome</keyword>
<keyword id="KW-0238">DNA-binding</keyword>
<keyword id="KW-0544">Nucleosome core</keyword>
<keyword id="KW-0539">Nucleus</keyword>
<keyword id="KW-1185">Reference proteome</keyword>
<feature type="initiator methionine" description="Removed" evidence="1">
    <location>
        <position position="1"/>
    </location>
</feature>
<feature type="chain" id="PRO_0000297728" description="Histone H2A.Z">
    <location>
        <begin position="2"/>
        <end position="133"/>
    </location>
</feature>
<feature type="region of interest" description="Disordered" evidence="2">
    <location>
        <begin position="1"/>
        <end position="30"/>
    </location>
</feature>
<feature type="compositionally biased region" description="Basic residues" evidence="2">
    <location>
        <begin position="1"/>
        <end position="11"/>
    </location>
</feature>
<feature type="compositionally biased region" description="Low complexity" evidence="2">
    <location>
        <begin position="15"/>
        <end position="26"/>
    </location>
</feature>
<feature type="modified residue" description="N-acetylserine" evidence="1">
    <location>
        <position position="2"/>
    </location>
</feature>
<feature type="modified residue" description="N6-acetyllysine" evidence="1">
    <location>
        <position position="4"/>
    </location>
</feature>
<feature type="modified residue" description="N6-acetyllysine" evidence="1">
    <location>
        <position position="11"/>
    </location>
</feature>
<feature type="modified residue" description="N6-acetyllysine" evidence="1">
    <location>
        <position position="13"/>
    </location>
</feature>
<protein>
    <recommendedName>
        <fullName>Histone H2A.Z</fullName>
    </recommendedName>
</protein>
<evidence type="ECO:0000250" key="1"/>
<evidence type="ECO:0000256" key="2">
    <source>
        <dbReference type="SAM" id="MobiDB-lite"/>
    </source>
</evidence>
<evidence type="ECO:0000305" key="3"/>
<gene>
    <name type="primary">HTZ1</name>
    <name type="ORF">PGUG_05563</name>
</gene>
<dbReference type="EMBL" id="CH408161">
    <property type="protein sequence ID" value="EDK41465.1"/>
    <property type="molecule type" value="Genomic_DNA"/>
</dbReference>
<dbReference type="RefSeq" id="XP_001482543.1">
    <property type="nucleotide sequence ID" value="XM_001482493.1"/>
</dbReference>
<dbReference type="SMR" id="A5DQL2"/>
<dbReference type="FunCoup" id="A5DQL2">
    <property type="interactions" value="1082"/>
</dbReference>
<dbReference type="STRING" id="294746.A5DQL2"/>
<dbReference type="GeneID" id="5123994"/>
<dbReference type="KEGG" id="pgu:PGUG_05563"/>
<dbReference type="VEuPathDB" id="FungiDB:PGUG_05563"/>
<dbReference type="eggNOG" id="KOG1757">
    <property type="taxonomic scope" value="Eukaryota"/>
</dbReference>
<dbReference type="HOGENOM" id="CLU_062828_2_1_1"/>
<dbReference type="InParanoid" id="A5DQL2"/>
<dbReference type="OMA" id="MNKKGAP"/>
<dbReference type="OrthoDB" id="9421954at2759"/>
<dbReference type="Proteomes" id="UP000001997">
    <property type="component" value="Unassembled WGS sequence"/>
</dbReference>
<dbReference type="GO" id="GO:0000791">
    <property type="term" value="C:euchromatin"/>
    <property type="evidence" value="ECO:0007669"/>
    <property type="project" value="EnsemblFungi"/>
</dbReference>
<dbReference type="GO" id="GO:0000786">
    <property type="term" value="C:nucleosome"/>
    <property type="evidence" value="ECO:0007669"/>
    <property type="project" value="UniProtKB-KW"/>
</dbReference>
<dbReference type="GO" id="GO:0005634">
    <property type="term" value="C:nucleus"/>
    <property type="evidence" value="ECO:0007669"/>
    <property type="project" value="UniProtKB-SubCell"/>
</dbReference>
<dbReference type="GO" id="GO:0031490">
    <property type="term" value="F:chromatin DNA binding"/>
    <property type="evidence" value="ECO:0007669"/>
    <property type="project" value="EnsemblFungi"/>
</dbReference>
<dbReference type="GO" id="GO:0042802">
    <property type="term" value="F:identical protein binding"/>
    <property type="evidence" value="ECO:0007669"/>
    <property type="project" value="EnsemblFungi"/>
</dbReference>
<dbReference type="GO" id="GO:0046982">
    <property type="term" value="F:protein heterodimerization activity"/>
    <property type="evidence" value="ECO:0007669"/>
    <property type="project" value="InterPro"/>
</dbReference>
<dbReference type="GO" id="GO:0000978">
    <property type="term" value="F:RNA polymerase II cis-regulatory region sequence-specific DNA binding"/>
    <property type="evidence" value="ECO:0007669"/>
    <property type="project" value="EnsemblFungi"/>
</dbReference>
<dbReference type="GO" id="GO:0030527">
    <property type="term" value="F:structural constituent of chromatin"/>
    <property type="evidence" value="ECO:0007669"/>
    <property type="project" value="InterPro"/>
</dbReference>
<dbReference type="GO" id="GO:0140898">
    <property type="term" value="P:CENP-A eviction from euchromatin"/>
    <property type="evidence" value="ECO:0007669"/>
    <property type="project" value="EnsemblFungi"/>
</dbReference>
<dbReference type="GO" id="GO:0070481">
    <property type="term" value="P:nuclear-transcribed mRNA catabolic process, non-stop decay"/>
    <property type="evidence" value="ECO:0007669"/>
    <property type="project" value="EnsemblFungi"/>
</dbReference>
<dbReference type="GO" id="GO:0006357">
    <property type="term" value="P:regulation of transcription by RNA polymerase II"/>
    <property type="evidence" value="ECO:0007669"/>
    <property type="project" value="EnsemblFungi"/>
</dbReference>
<dbReference type="GO" id="GO:0030466">
    <property type="term" value="P:silent mating-type cassette heterochromatin formation"/>
    <property type="evidence" value="ECO:0007669"/>
    <property type="project" value="EnsemblFungi"/>
</dbReference>
<dbReference type="GO" id="GO:0006368">
    <property type="term" value="P:transcription elongation by RNA polymerase II"/>
    <property type="evidence" value="ECO:0007669"/>
    <property type="project" value="EnsemblFungi"/>
</dbReference>
<dbReference type="CDD" id="cd00074">
    <property type="entry name" value="HFD_H2A"/>
    <property type="match status" value="1"/>
</dbReference>
<dbReference type="FunFam" id="1.10.20.10:FF:000021">
    <property type="entry name" value="Histone H2A"/>
    <property type="match status" value="1"/>
</dbReference>
<dbReference type="Gene3D" id="1.10.20.10">
    <property type="entry name" value="Histone, subunit A"/>
    <property type="match status" value="1"/>
</dbReference>
<dbReference type="InterPro" id="IPR009072">
    <property type="entry name" value="Histone-fold"/>
</dbReference>
<dbReference type="InterPro" id="IPR002119">
    <property type="entry name" value="Histone_H2A"/>
</dbReference>
<dbReference type="InterPro" id="IPR007125">
    <property type="entry name" value="Histone_H2A/H2B/H3"/>
</dbReference>
<dbReference type="InterPro" id="IPR032454">
    <property type="entry name" value="Histone_H2A_C"/>
</dbReference>
<dbReference type="InterPro" id="IPR032458">
    <property type="entry name" value="Histone_H2A_CS"/>
</dbReference>
<dbReference type="PANTHER" id="PTHR23430">
    <property type="entry name" value="HISTONE H2A"/>
    <property type="match status" value="1"/>
</dbReference>
<dbReference type="Pfam" id="PF00125">
    <property type="entry name" value="Histone"/>
    <property type="match status" value="1"/>
</dbReference>
<dbReference type="Pfam" id="PF16211">
    <property type="entry name" value="Histone_H2A_C"/>
    <property type="match status" value="1"/>
</dbReference>
<dbReference type="PRINTS" id="PR00620">
    <property type="entry name" value="HISTONEH2A"/>
</dbReference>
<dbReference type="SMART" id="SM00414">
    <property type="entry name" value="H2A"/>
    <property type="match status" value="1"/>
</dbReference>
<dbReference type="SUPFAM" id="SSF47113">
    <property type="entry name" value="Histone-fold"/>
    <property type="match status" value="1"/>
</dbReference>
<dbReference type="PROSITE" id="PS00046">
    <property type="entry name" value="HISTONE_H2A"/>
    <property type="match status" value="1"/>
</dbReference>
<accession>A5DQL2</accession>
<organism>
    <name type="scientific">Meyerozyma guilliermondii (strain ATCC 6260 / CBS 566 / DSM 6381 / JCM 1539 / NBRC 10279 / NRRL Y-324)</name>
    <name type="common">Yeast</name>
    <name type="synonym">Candida guilliermondii</name>
    <dbReference type="NCBI Taxonomy" id="294746"/>
    <lineage>
        <taxon>Eukaryota</taxon>
        <taxon>Fungi</taxon>
        <taxon>Dikarya</taxon>
        <taxon>Ascomycota</taxon>
        <taxon>Saccharomycotina</taxon>
        <taxon>Pichiomycetes</taxon>
        <taxon>Debaryomycetaceae</taxon>
        <taxon>Meyerozyma</taxon>
    </lineage>
</organism>
<comment type="function">
    <text evidence="1">Variant histone H2A which can replace H2A in some nucleosomes. Nucleosomes wrap and compact DNA into chromatin, limiting DNA accessibility to the cellular machineries which require DNA as a template. Histones thereby play a central role in transcription regulation, DNA repair, DNA replication and chromosomal stability. DNA accessibility is regulated via a complex set of post-translational modifications of histones, also called histone code, and nucleosome remodeling. This variant is enriched at promoters, it may keep them in a repressed state until the appropriate activation signal is received. Near telomeres, it may counteract gene silencing caused by the spread of heterochromatin proteins. Required for the RNA polymerase II and SPT15/TBP recruitment to the target genes. Involved in chromosome stability (By similarity).</text>
</comment>
<comment type="subunit">
    <text evidence="1">The nucleosome is a histone octamer containing two molecules each of H2A, H2B, H3 and H4 assembled in one H3-H4 heterotetramer and two H2A-H2B heterodimers. The octamer wraps approximately 147 bp of DNA. H2A or its variant H2A.Z forms a heterodimer with H2B. H2A.Z associates with the VPS72/SWC2 subunit of the SWR1 chromatin remodeling complex. Also interacts with RBP1/DNA-directed RNA polymerase II largest subunit (By similarity).</text>
</comment>
<comment type="subcellular location">
    <subcellularLocation>
        <location evidence="1">Nucleus</location>
    </subcellularLocation>
    <subcellularLocation>
        <location evidence="1">Chromosome</location>
    </subcellularLocation>
</comment>
<comment type="PTM">
    <text evidence="1">Acetylated once deposited into chromatin.</text>
</comment>
<comment type="similarity">
    <text evidence="3">Belongs to the histone H2A family.</text>
</comment>
<proteinExistence type="inferred from homology"/>